<sequence>MATPQRLTDPEIQTALGELGGWSLQGNKLHRQFKFANFNQAFGFMTRLALVAETLNHHPEWSNVYNRVTIDLTTHDAGGITELDVKFATKANSFAD</sequence>
<name>PHS_SYNY3</name>
<proteinExistence type="inferred from homology"/>
<evidence type="ECO:0000305" key="1"/>
<keyword id="KW-0456">Lyase</keyword>
<keyword id="KW-1185">Reference proteome</keyword>
<feature type="chain" id="PRO_0000063100" description="Putative pterin-4-alpha-carbinolamine dehydratase">
    <location>
        <begin position="1"/>
        <end position="96"/>
    </location>
</feature>
<protein>
    <recommendedName>
        <fullName>Putative pterin-4-alpha-carbinolamine dehydratase</fullName>
        <shortName>PHS</shortName>
        <ecNumber>4.2.1.96</ecNumber>
    </recommendedName>
    <alternativeName>
        <fullName>4-alpha-hydroxy-tetrahydropterin dehydratase</fullName>
    </alternativeName>
    <alternativeName>
        <fullName>Pterin carbinolamine dehydratase</fullName>
        <shortName>PCD</shortName>
    </alternativeName>
</protein>
<comment type="catalytic activity">
    <reaction>
        <text>(4aS,6R)-4a-hydroxy-L-erythro-5,6,7,8-tetrahydrobiopterin = (6R)-L-erythro-6,7-dihydrobiopterin + H2O</text>
        <dbReference type="Rhea" id="RHEA:11920"/>
        <dbReference type="ChEBI" id="CHEBI:15377"/>
        <dbReference type="ChEBI" id="CHEBI:15642"/>
        <dbReference type="ChEBI" id="CHEBI:43120"/>
        <dbReference type="EC" id="4.2.1.96"/>
    </reaction>
</comment>
<comment type="similarity">
    <text evidence="1">Belongs to the pterin-4-alpha-carbinolamine dehydratase family.</text>
</comment>
<gene>
    <name type="ordered locus">ssl2296</name>
</gene>
<accession>P73790</accession>
<reference key="1">
    <citation type="journal article" date="1996" name="DNA Res.">
        <title>Sequence analysis of the genome of the unicellular cyanobacterium Synechocystis sp. strain PCC6803. II. Sequence determination of the entire genome and assignment of potential protein-coding regions.</title>
        <authorList>
            <person name="Kaneko T."/>
            <person name="Sato S."/>
            <person name="Kotani H."/>
            <person name="Tanaka A."/>
            <person name="Asamizu E."/>
            <person name="Nakamura Y."/>
            <person name="Miyajima N."/>
            <person name="Hirosawa M."/>
            <person name="Sugiura M."/>
            <person name="Sasamoto S."/>
            <person name="Kimura T."/>
            <person name="Hosouchi T."/>
            <person name="Matsuno A."/>
            <person name="Muraki A."/>
            <person name="Nakazaki N."/>
            <person name="Naruo K."/>
            <person name="Okumura S."/>
            <person name="Shimpo S."/>
            <person name="Takeuchi C."/>
            <person name="Wada T."/>
            <person name="Watanabe A."/>
            <person name="Yamada M."/>
            <person name="Yasuda M."/>
            <person name="Tabata S."/>
        </authorList>
    </citation>
    <scope>NUCLEOTIDE SEQUENCE [LARGE SCALE GENOMIC DNA]</scope>
    <source>
        <strain>ATCC 27184 / PCC 6803 / Kazusa</strain>
    </source>
</reference>
<dbReference type="EC" id="4.2.1.96"/>
<dbReference type="EMBL" id="BA000022">
    <property type="protein sequence ID" value="BAA17842.1"/>
    <property type="molecule type" value="Genomic_DNA"/>
</dbReference>
<dbReference type="PIR" id="S74881">
    <property type="entry name" value="S74881"/>
</dbReference>
<dbReference type="SMR" id="P73790"/>
<dbReference type="IntAct" id="P73790">
    <property type="interactions" value="2"/>
</dbReference>
<dbReference type="STRING" id="1148.gene:10498710"/>
<dbReference type="PaxDb" id="1148-1652924"/>
<dbReference type="EnsemblBacteria" id="BAA17842">
    <property type="protein sequence ID" value="BAA17842"/>
    <property type="gene ID" value="BAA17842"/>
</dbReference>
<dbReference type="KEGG" id="syn:ssl2296"/>
<dbReference type="eggNOG" id="COG2154">
    <property type="taxonomic scope" value="Bacteria"/>
</dbReference>
<dbReference type="InParanoid" id="P73790"/>
<dbReference type="PhylomeDB" id="P73790"/>
<dbReference type="Proteomes" id="UP000001425">
    <property type="component" value="Chromosome"/>
</dbReference>
<dbReference type="GO" id="GO:0008124">
    <property type="term" value="F:4-alpha-hydroxytetrahydrobiopterin dehydratase activity"/>
    <property type="evidence" value="ECO:0000318"/>
    <property type="project" value="GO_Central"/>
</dbReference>
<dbReference type="GO" id="GO:0006729">
    <property type="term" value="P:tetrahydrobiopterin biosynthetic process"/>
    <property type="evidence" value="ECO:0007669"/>
    <property type="project" value="InterPro"/>
</dbReference>
<dbReference type="CDD" id="cd00914">
    <property type="entry name" value="PCD_DCoH_subfamily_b"/>
    <property type="match status" value="1"/>
</dbReference>
<dbReference type="Gene3D" id="3.30.1360.20">
    <property type="entry name" value="Transcriptional coactivator/pterin dehydratase"/>
    <property type="match status" value="1"/>
</dbReference>
<dbReference type="HAMAP" id="MF_00434">
    <property type="entry name" value="Pterin_4_alpha"/>
    <property type="match status" value="1"/>
</dbReference>
<dbReference type="InterPro" id="IPR036428">
    <property type="entry name" value="PCD_sf"/>
</dbReference>
<dbReference type="InterPro" id="IPR001533">
    <property type="entry name" value="Pterin_deHydtase"/>
</dbReference>
<dbReference type="NCBIfam" id="NF002017">
    <property type="entry name" value="PRK00823.1-2"/>
    <property type="match status" value="1"/>
</dbReference>
<dbReference type="NCBIfam" id="NF002018">
    <property type="entry name" value="PRK00823.1-3"/>
    <property type="match status" value="1"/>
</dbReference>
<dbReference type="PANTHER" id="PTHR12599">
    <property type="entry name" value="PTERIN-4-ALPHA-CARBINOLAMINE DEHYDRATASE"/>
    <property type="match status" value="1"/>
</dbReference>
<dbReference type="PANTHER" id="PTHR12599:SF0">
    <property type="entry name" value="PTERIN-4-ALPHA-CARBINOLAMINE DEHYDRATASE"/>
    <property type="match status" value="1"/>
</dbReference>
<dbReference type="Pfam" id="PF01329">
    <property type="entry name" value="Pterin_4a"/>
    <property type="match status" value="1"/>
</dbReference>
<dbReference type="SUPFAM" id="SSF55248">
    <property type="entry name" value="PCD-like"/>
    <property type="match status" value="1"/>
</dbReference>
<organism>
    <name type="scientific">Synechocystis sp. (strain ATCC 27184 / PCC 6803 / Kazusa)</name>
    <dbReference type="NCBI Taxonomy" id="1111708"/>
    <lineage>
        <taxon>Bacteria</taxon>
        <taxon>Bacillati</taxon>
        <taxon>Cyanobacteriota</taxon>
        <taxon>Cyanophyceae</taxon>
        <taxon>Synechococcales</taxon>
        <taxon>Merismopediaceae</taxon>
        <taxon>Synechocystis</taxon>
    </lineage>
</organism>